<reference key="1">
    <citation type="journal article" date="1996" name="Proc. Natl. Acad. Sci. U.S.A.">
        <title>Structure, tissue distribution, and chromosomal localization of the prepronociceptin gene.</title>
        <authorList>
            <person name="Mollereau C."/>
            <person name="Simons M.-J."/>
            <person name="Soularue P."/>
            <person name="Liners F."/>
            <person name="Vassart G."/>
            <person name="Meunier J.-C."/>
            <person name="Parmentier M."/>
        </authorList>
    </citation>
    <scope>NUCLEOTIDE SEQUENCE [GENOMIC DNA / MRNA] (ISOFORM 1)</scope>
</reference>
<reference key="2">
    <citation type="journal article" date="1996" name="Proc. Natl. Acad. Sci. U.S.A.">
        <title>Primary structure and tissue distribution of the orphanin FQ precursor.</title>
        <authorList>
            <person name="Nothacker H.-P."/>
            <person name="Reinscheid R.K."/>
            <person name="Mansour A."/>
            <person name="Henningsen R.A."/>
            <person name="Ardati A."/>
            <person name="Monsma F.J. Jr."/>
            <person name="Watson S.J."/>
            <person name="Civelli O."/>
        </authorList>
    </citation>
    <scope>NUCLEOTIDE SEQUENCE [MRNA] (ISOFORM 1)</scope>
    <source>
        <tissue>Brain</tissue>
    </source>
</reference>
<reference key="3">
    <citation type="journal article" date="2003" name="Biochemistry">
        <title>Human neutrophils as a source of nociceptin: a novel link between pain and inflammation.</title>
        <authorList>
            <person name="Fiset M.E."/>
            <person name="Gilbert C."/>
            <person name="Poubelle P.E."/>
            <person name="Pouliot M."/>
        </authorList>
    </citation>
    <scope>NUCLEOTIDE SEQUENCE [MRNA] (ISOFORM 1)</scope>
    <scope>TISSUE SPECIFICITY</scope>
</reference>
<reference key="4">
    <citation type="journal article" date="2004" name="Nat. Genet.">
        <title>Complete sequencing and characterization of 21,243 full-length human cDNAs.</title>
        <authorList>
            <person name="Ota T."/>
            <person name="Suzuki Y."/>
            <person name="Nishikawa T."/>
            <person name="Otsuki T."/>
            <person name="Sugiyama T."/>
            <person name="Irie R."/>
            <person name="Wakamatsu A."/>
            <person name="Hayashi K."/>
            <person name="Sato H."/>
            <person name="Nagai K."/>
            <person name="Kimura K."/>
            <person name="Makita H."/>
            <person name="Sekine M."/>
            <person name="Obayashi M."/>
            <person name="Nishi T."/>
            <person name="Shibahara T."/>
            <person name="Tanaka T."/>
            <person name="Ishii S."/>
            <person name="Yamamoto J."/>
            <person name="Saito K."/>
            <person name="Kawai Y."/>
            <person name="Isono Y."/>
            <person name="Nakamura Y."/>
            <person name="Nagahari K."/>
            <person name="Murakami K."/>
            <person name="Yasuda T."/>
            <person name="Iwayanagi T."/>
            <person name="Wagatsuma M."/>
            <person name="Shiratori A."/>
            <person name="Sudo H."/>
            <person name="Hosoiri T."/>
            <person name="Kaku Y."/>
            <person name="Kodaira H."/>
            <person name="Kondo H."/>
            <person name="Sugawara M."/>
            <person name="Takahashi M."/>
            <person name="Kanda K."/>
            <person name="Yokoi T."/>
            <person name="Furuya T."/>
            <person name="Kikkawa E."/>
            <person name="Omura Y."/>
            <person name="Abe K."/>
            <person name="Kamihara K."/>
            <person name="Katsuta N."/>
            <person name="Sato K."/>
            <person name="Tanikawa M."/>
            <person name="Yamazaki M."/>
            <person name="Ninomiya K."/>
            <person name="Ishibashi T."/>
            <person name="Yamashita H."/>
            <person name="Murakawa K."/>
            <person name="Fujimori K."/>
            <person name="Tanai H."/>
            <person name="Kimata M."/>
            <person name="Watanabe M."/>
            <person name="Hiraoka S."/>
            <person name="Chiba Y."/>
            <person name="Ishida S."/>
            <person name="Ono Y."/>
            <person name="Takiguchi S."/>
            <person name="Watanabe S."/>
            <person name="Yosida M."/>
            <person name="Hotuta T."/>
            <person name="Kusano J."/>
            <person name="Kanehori K."/>
            <person name="Takahashi-Fujii A."/>
            <person name="Hara H."/>
            <person name="Tanase T.-O."/>
            <person name="Nomura Y."/>
            <person name="Togiya S."/>
            <person name="Komai F."/>
            <person name="Hara R."/>
            <person name="Takeuchi K."/>
            <person name="Arita M."/>
            <person name="Imose N."/>
            <person name="Musashino K."/>
            <person name="Yuuki H."/>
            <person name="Oshima A."/>
            <person name="Sasaki N."/>
            <person name="Aotsuka S."/>
            <person name="Yoshikawa Y."/>
            <person name="Matsunawa H."/>
            <person name="Ichihara T."/>
            <person name="Shiohata N."/>
            <person name="Sano S."/>
            <person name="Moriya S."/>
            <person name="Momiyama H."/>
            <person name="Satoh N."/>
            <person name="Takami S."/>
            <person name="Terashima Y."/>
            <person name="Suzuki O."/>
            <person name="Nakagawa S."/>
            <person name="Senoh A."/>
            <person name="Mizoguchi H."/>
            <person name="Goto Y."/>
            <person name="Shimizu F."/>
            <person name="Wakebe H."/>
            <person name="Hishigaki H."/>
            <person name="Watanabe T."/>
            <person name="Sugiyama A."/>
            <person name="Takemoto M."/>
            <person name="Kawakami B."/>
            <person name="Yamazaki M."/>
            <person name="Watanabe K."/>
            <person name="Kumagai A."/>
            <person name="Itakura S."/>
            <person name="Fukuzumi Y."/>
            <person name="Fujimori Y."/>
            <person name="Komiyama M."/>
            <person name="Tashiro H."/>
            <person name="Tanigami A."/>
            <person name="Fujiwara T."/>
            <person name="Ono T."/>
            <person name="Yamada K."/>
            <person name="Fujii Y."/>
            <person name="Ozaki K."/>
            <person name="Hirao M."/>
            <person name="Ohmori Y."/>
            <person name="Kawabata A."/>
            <person name="Hikiji T."/>
            <person name="Kobatake N."/>
            <person name="Inagaki H."/>
            <person name="Ikema Y."/>
            <person name="Okamoto S."/>
            <person name="Okitani R."/>
            <person name="Kawakami T."/>
            <person name="Noguchi S."/>
            <person name="Itoh T."/>
            <person name="Shigeta K."/>
            <person name="Senba T."/>
            <person name="Matsumura K."/>
            <person name="Nakajima Y."/>
            <person name="Mizuno T."/>
            <person name="Morinaga M."/>
            <person name="Sasaki M."/>
            <person name="Togashi T."/>
            <person name="Oyama M."/>
            <person name="Hata H."/>
            <person name="Watanabe M."/>
            <person name="Komatsu T."/>
            <person name="Mizushima-Sugano J."/>
            <person name="Satoh T."/>
            <person name="Shirai Y."/>
            <person name="Takahashi Y."/>
            <person name="Nakagawa K."/>
            <person name="Okumura K."/>
            <person name="Nagase T."/>
            <person name="Nomura N."/>
            <person name="Kikuchi H."/>
            <person name="Masuho Y."/>
            <person name="Yamashita R."/>
            <person name="Nakai K."/>
            <person name="Yada T."/>
            <person name="Nakamura Y."/>
            <person name="Ohara O."/>
            <person name="Isogai T."/>
            <person name="Sugano S."/>
        </authorList>
    </citation>
    <scope>NUCLEOTIDE SEQUENCE [LARGE SCALE MRNA] (ISOFORM 2)</scope>
    <source>
        <tissue>Synovium</tissue>
    </source>
</reference>
<reference key="5">
    <citation type="submission" date="2004-06" db="EMBL/GenBank/DDBJ databases">
        <title>Cloning of human full open reading frames in Gateway(TM) system entry vector (pDONR201).</title>
        <authorList>
            <person name="Ebert L."/>
            <person name="Schick M."/>
            <person name="Neubert P."/>
            <person name="Schatten R."/>
            <person name="Henze S."/>
            <person name="Korn B."/>
        </authorList>
    </citation>
    <scope>NUCLEOTIDE SEQUENCE [LARGE SCALE MRNA] (ISOFORM 1)</scope>
</reference>
<reference key="6">
    <citation type="submission" date="2004-10" db="EMBL/GenBank/DDBJ databases">
        <title>Cloning of human full-length CDSs in BD Creator(TM) system donor vector.</title>
        <authorList>
            <person name="Kalnine N."/>
            <person name="Chen X."/>
            <person name="Rolfs A."/>
            <person name="Halleck A."/>
            <person name="Hines L."/>
            <person name="Eisenstein S."/>
            <person name="Koundinya M."/>
            <person name="Raphael J."/>
            <person name="Moreira D."/>
            <person name="Kelley T."/>
            <person name="LaBaer J."/>
            <person name="Lin Y."/>
            <person name="Phelan M."/>
            <person name="Farmer A."/>
        </authorList>
    </citation>
    <scope>NUCLEOTIDE SEQUENCE [LARGE SCALE MRNA] (ISOFORM 1)</scope>
</reference>
<reference key="7">
    <citation type="submission" date="2005-09" db="EMBL/GenBank/DDBJ databases">
        <authorList>
            <person name="Mural R.J."/>
            <person name="Istrail S."/>
            <person name="Sutton G."/>
            <person name="Florea L."/>
            <person name="Halpern A.L."/>
            <person name="Mobarry C.M."/>
            <person name="Lippert R."/>
            <person name="Walenz B."/>
            <person name="Shatkay H."/>
            <person name="Dew I."/>
            <person name="Miller J.R."/>
            <person name="Flanigan M.J."/>
            <person name="Edwards N.J."/>
            <person name="Bolanos R."/>
            <person name="Fasulo D."/>
            <person name="Halldorsson B.V."/>
            <person name="Hannenhalli S."/>
            <person name="Turner R."/>
            <person name="Yooseph S."/>
            <person name="Lu F."/>
            <person name="Nusskern D.R."/>
            <person name="Shue B.C."/>
            <person name="Zheng X.H."/>
            <person name="Zhong F."/>
            <person name="Delcher A.L."/>
            <person name="Huson D.H."/>
            <person name="Kravitz S.A."/>
            <person name="Mouchard L."/>
            <person name="Reinert K."/>
            <person name="Remington K.A."/>
            <person name="Clark A.G."/>
            <person name="Waterman M.S."/>
            <person name="Eichler E.E."/>
            <person name="Adams M.D."/>
            <person name="Hunkapiller M.W."/>
            <person name="Myers E.W."/>
            <person name="Venter J.C."/>
        </authorList>
    </citation>
    <scope>NUCLEOTIDE SEQUENCE [LARGE SCALE GENOMIC DNA]</scope>
</reference>
<reference key="8">
    <citation type="journal article" date="2004" name="Genome Res.">
        <title>The status, quality, and expansion of the NIH full-length cDNA project: the Mammalian Gene Collection (MGC).</title>
        <authorList>
            <consortium name="The MGC Project Team"/>
        </authorList>
    </citation>
    <scope>NUCLEOTIDE SEQUENCE [LARGE SCALE MRNA] (ISOFORM 1)</scope>
    <source>
        <tissue>Brain</tissue>
    </source>
</reference>
<reference key="9">
    <citation type="journal article" date="1997" name="Biochem. Biophys. Res. Commun.">
        <title>Solution conformation of nociceptin.</title>
        <authorList>
            <person name="Salvadori S."/>
            <person name="Picone D."/>
            <person name="Tancredi T."/>
            <person name="Guerrini R."/>
            <person name="Spadaccini R."/>
            <person name="Lazarus L.H."/>
            <person name="Regoli D."/>
            <person name="Temussi P.A."/>
        </authorList>
    </citation>
    <scope>STRUCTURE BY NMR OF NOCICEPTIN</scope>
</reference>
<proteinExistence type="evidence at protein level"/>
<organism>
    <name type="scientific">Homo sapiens</name>
    <name type="common">Human</name>
    <dbReference type="NCBI Taxonomy" id="9606"/>
    <lineage>
        <taxon>Eukaryota</taxon>
        <taxon>Metazoa</taxon>
        <taxon>Chordata</taxon>
        <taxon>Craniata</taxon>
        <taxon>Vertebrata</taxon>
        <taxon>Euteleostomi</taxon>
        <taxon>Mammalia</taxon>
        <taxon>Eutheria</taxon>
        <taxon>Euarchontoglires</taxon>
        <taxon>Primates</taxon>
        <taxon>Haplorrhini</taxon>
        <taxon>Catarrhini</taxon>
        <taxon>Hominidae</taxon>
        <taxon>Homo</taxon>
    </lineage>
</organism>
<dbReference type="EMBL" id="X97370">
    <property type="protein sequence ID" value="CAA66040.1"/>
    <property type="molecule type" value="mRNA"/>
</dbReference>
<dbReference type="EMBL" id="X97367">
    <property type="protein sequence ID" value="CAA66039.1"/>
    <property type="molecule type" value="Genomic_DNA"/>
</dbReference>
<dbReference type="EMBL" id="X97368">
    <property type="protein sequence ID" value="CAA66039.1"/>
    <property type="status" value="JOINED"/>
    <property type="molecule type" value="Genomic_DNA"/>
</dbReference>
<dbReference type="EMBL" id="U48263">
    <property type="protein sequence ID" value="AAC50651.1"/>
    <property type="molecule type" value="mRNA"/>
</dbReference>
<dbReference type="EMBL" id="AY335948">
    <property type="protein sequence ID" value="AAP94601.1"/>
    <property type="molecule type" value="mRNA"/>
</dbReference>
<dbReference type="EMBL" id="AK301456">
    <property type="protein sequence ID" value="BAH13485.1"/>
    <property type="molecule type" value="mRNA"/>
</dbReference>
<dbReference type="EMBL" id="BT019334">
    <property type="protein sequence ID" value="AAV38141.1"/>
    <property type="molecule type" value="mRNA"/>
</dbReference>
<dbReference type="EMBL" id="CR541940">
    <property type="protein sequence ID" value="CAG46738.1"/>
    <property type="molecule type" value="mRNA"/>
</dbReference>
<dbReference type="EMBL" id="CR541965">
    <property type="protein sequence ID" value="CAG46763.1"/>
    <property type="molecule type" value="mRNA"/>
</dbReference>
<dbReference type="EMBL" id="AC021678">
    <property type="status" value="NOT_ANNOTATED_CDS"/>
    <property type="molecule type" value="Genomic_DNA"/>
</dbReference>
<dbReference type="EMBL" id="CH471080">
    <property type="protein sequence ID" value="EAW63526.1"/>
    <property type="molecule type" value="Genomic_DNA"/>
</dbReference>
<dbReference type="EMBL" id="CH471080">
    <property type="protein sequence ID" value="EAW63527.1"/>
    <property type="molecule type" value="Genomic_DNA"/>
</dbReference>
<dbReference type="EMBL" id="BC034758">
    <property type="protein sequence ID" value="AAH34758.1"/>
    <property type="molecule type" value="mRNA"/>
</dbReference>
<dbReference type="CCDS" id="CCDS6066.1">
    <molecule id="Q13519-1"/>
</dbReference>
<dbReference type="CCDS" id="CCDS64862.1">
    <molecule id="Q13519-2"/>
</dbReference>
<dbReference type="PIR" id="JC6152">
    <property type="entry name" value="JC6152"/>
</dbReference>
<dbReference type="RefSeq" id="NP_001271173.1">
    <molecule id="Q13519-2"/>
    <property type="nucleotide sequence ID" value="NM_001284244.2"/>
</dbReference>
<dbReference type="RefSeq" id="NP_006219.1">
    <molecule id="Q13519-1"/>
    <property type="nucleotide sequence ID" value="NM_006228.5"/>
</dbReference>
<dbReference type="PDB" id="8F7X">
    <property type="method" value="EM"/>
    <property type="resolution" value="3.28 A"/>
    <property type="chains" value="P=130-143"/>
</dbReference>
<dbReference type="PDBsum" id="8F7X"/>
<dbReference type="EMDB" id="EMD-28912"/>
<dbReference type="SMR" id="Q13519"/>
<dbReference type="BioGRID" id="111381">
    <property type="interactions" value="16"/>
</dbReference>
<dbReference type="FunCoup" id="Q13519">
    <property type="interactions" value="445"/>
</dbReference>
<dbReference type="IntAct" id="Q13519">
    <property type="interactions" value="15"/>
</dbReference>
<dbReference type="STRING" id="9606.ENSP00000301908"/>
<dbReference type="BindingDB" id="Q13519"/>
<dbReference type="TCDB" id="1.C.89.1.3">
    <property type="family name" value="the dynorphin channel-forming neuropeptide (dynorphin) family"/>
</dbReference>
<dbReference type="iPTMnet" id="Q13519"/>
<dbReference type="PhosphoSitePlus" id="Q13519"/>
<dbReference type="BioMuta" id="PNOC"/>
<dbReference type="DMDM" id="2494348"/>
<dbReference type="MassIVE" id="Q13519"/>
<dbReference type="PaxDb" id="9606-ENSP00000301908"/>
<dbReference type="PeptideAtlas" id="Q13519"/>
<dbReference type="ProteomicsDB" id="59515">
    <molecule id="Q13519-1"/>
</dbReference>
<dbReference type="ProteomicsDB" id="6832"/>
<dbReference type="TopDownProteomics" id="Q13519-2">
    <molecule id="Q13519-2"/>
</dbReference>
<dbReference type="Antibodypedia" id="10388">
    <property type="antibodies" value="295 antibodies from 30 providers"/>
</dbReference>
<dbReference type="DNASU" id="5368"/>
<dbReference type="Ensembl" id="ENST00000301908.8">
    <molecule id="Q13519-1"/>
    <property type="protein sequence ID" value="ENSP00000301908.3"/>
    <property type="gene ID" value="ENSG00000168081.9"/>
</dbReference>
<dbReference type="Ensembl" id="ENST00000522209.1">
    <molecule id="Q13519-2"/>
    <property type="protein sequence ID" value="ENSP00000430145.1"/>
    <property type="gene ID" value="ENSG00000168081.9"/>
</dbReference>
<dbReference type="GeneID" id="5368"/>
<dbReference type="KEGG" id="hsa:5368"/>
<dbReference type="MANE-Select" id="ENST00000301908.8">
    <property type="protein sequence ID" value="ENSP00000301908.3"/>
    <property type="RefSeq nucleotide sequence ID" value="NM_006228.5"/>
    <property type="RefSeq protein sequence ID" value="NP_006219.1"/>
</dbReference>
<dbReference type="UCSC" id="uc003xgp.5">
    <molecule id="Q13519-1"/>
    <property type="organism name" value="human"/>
</dbReference>
<dbReference type="AGR" id="HGNC:9163"/>
<dbReference type="CTD" id="5368"/>
<dbReference type="DisGeNET" id="5368"/>
<dbReference type="GeneCards" id="PNOC"/>
<dbReference type="HGNC" id="HGNC:9163">
    <property type="gene designation" value="PNOC"/>
</dbReference>
<dbReference type="HPA" id="ENSG00000168081">
    <property type="expression patterns" value="Group enriched (brain, fallopian tube, lymphoid tissue)"/>
</dbReference>
<dbReference type="MIM" id="601459">
    <property type="type" value="gene"/>
</dbReference>
<dbReference type="neXtProt" id="NX_Q13519"/>
<dbReference type="OpenTargets" id="ENSG00000168081"/>
<dbReference type="PharmGKB" id="PA33485"/>
<dbReference type="VEuPathDB" id="HostDB:ENSG00000168081"/>
<dbReference type="eggNOG" id="ENOG502S0DD">
    <property type="taxonomic scope" value="Eukaryota"/>
</dbReference>
<dbReference type="GeneTree" id="ENSGT00950000183149"/>
<dbReference type="HOGENOM" id="CLU_143892_0_0_1"/>
<dbReference type="InParanoid" id="Q13519"/>
<dbReference type="OMA" id="DCLNCHR"/>
<dbReference type="OrthoDB" id="9884757at2759"/>
<dbReference type="PAN-GO" id="Q13519">
    <property type="GO annotations" value="8 GO annotations based on evolutionary models"/>
</dbReference>
<dbReference type="PhylomeDB" id="Q13519"/>
<dbReference type="TreeFam" id="TF332620"/>
<dbReference type="PathwayCommons" id="Q13519"/>
<dbReference type="Reactome" id="R-HSA-375276">
    <property type="pathway name" value="Peptide ligand-binding receptors"/>
</dbReference>
<dbReference type="Reactome" id="R-HSA-418594">
    <property type="pathway name" value="G alpha (i) signalling events"/>
</dbReference>
<dbReference type="SignaLink" id="Q13519"/>
<dbReference type="BioGRID-ORCS" id="5368">
    <property type="hits" value="13 hits in 1139 CRISPR screens"/>
</dbReference>
<dbReference type="ChiTaRS" id="PNOC">
    <property type="organism name" value="human"/>
</dbReference>
<dbReference type="GenomeRNAi" id="5368"/>
<dbReference type="Pharos" id="Q13519">
    <property type="development level" value="Tbio"/>
</dbReference>
<dbReference type="PRO" id="PR:Q13519"/>
<dbReference type="Proteomes" id="UP000005640">
    <property type="component" value="Chromosome 8"/>
</dbReference>
<dbReference type="RNAct" id="Q13519">
    <property type="molecule type" value="protein"/>
</dbReference>
<dbReference type="Bgee" id="ENSG00000168081">
    <property type="expression patterns" value="Expressed in male germ line stem cell (sensu Vertebrata) in testis and 119 other cell types or tissues"/>
</dbReference>
<dbReference type="ExpressionAtlas" id="Q13519">
    <property type="expression patterns" value="baseline and differential"/>
</dbReference>
<dbReference type="GO" id="GO:0043679">
    <property type="term" value="C:axon terminus"/>
    <property type="evidence" value="ECO:0000318"/>
    <property type="project" value="GO_Central"/>
</dbReference>
<dbReference type="GO" id="GO:0030425">
    <property type="term" value="C:dendrite"/>
    <property type="evidence" value="ECO:0000318"/>
    <property type="project" value="GO_Central"/>
</dbReference>
<dbReference type="GO" id="GO:0005576">
    <property type="term" value="C:extracellular region"/>
    <property type="evidence" value="ECO:0000304"/>
    <property type="project" value="Reactome"/>
</dbReference>
<dbReference type="GO" id="GO:0043025">
    <property type="term" value="C:neuronal cell body"/>
    <property type="evidence" value="ECO:0000318"/>
    <property type="project" value="GO_Central"/>
</dbReference>
<dbReference type="GO" id="GO:0005886">
    <property type="term" value="C:plasma membrane"/>
    <property type="evidence" value="ECO:0000318"/>
    <property type="project" value="GO_Central"/>
</dbReference>
<dbReference type="GO" id="GO:0097060">
    <property type="term" value="C:synaptic membrane"/>
    <property type="evidence" value="ECO:0007669"/>
    <property type="project" value="Ensembl"/>
</dbReference>
<dbReference type="GO" id="GO:0005184">
    <property type="term" value="F:neuropeptide hormone activity"/>
    <property type="evidence" value="ECO:0000304"/>
    <property type="project" value="ProtInc"/>
</dbReference>
<dbReference type="GO" id="GO:0001515">
    <property type="term" value="F:opioid peptide activity"/>
    <property type="evidence" value="ECO:0007669"/>
    <property type="project" value="UniProtKB-KW"/>
</dbReference>
<dbReference type="GO" id="GO:0007268">
    <property type="term" value="P:chemical synaptic transmission"/>
    <property type="evidence" value="ECO:0000318"/>
    <property type="project" value="GO_Central"/>
</dbReference>
<dbReference type="GO" id="GO:0007565">
    <property type="term" value="P:female pregnancy"/>
    <property type="evidence" value="ECO:0007669"/>
    <property type="project" value="Ensembl"/>
</dbReference>
<dbReference type="GO" id="GO:0007270">
    <property type="term" value="P:neuron-neuron synaptic transmission"/>
    <property type="evidence" value="ECO:0007669"/>
    <property type="project" value="Ensembl"/>
</dbReference>
<dbReference type="GO" id="GO:0007218">
    <property type="term" value="P:neuropeptide signaling pathway"/>
    <property type="evidence" value="ECO:0000318"/>
    <property type="project" value="GO_Central"/>
</dbReference>
<dbReference type="GO" id="GO:0007600">
    <property type="term" value="P:sensory perception"/>
    <property type="evidence" value="ECO:0000318"/>
    <property type="project" value="GO_Central"/>
</dbReference>
<dbReference type="GO" id="GO:0019233">
    <property type="term" value="P:sensory perception of pain"/>
    <property type="evidence" value="ECO:0007669"/>
    <property type="project" value="Ensembl"/>
</dbReference>
<dbReference type="GO" id="GO:0007165">
    <property type="term" value="P:signal transduction"/>
    <property type="evidence" value="ECO:0000304"/>
    <property type="project" value="ProtInc"/>
</dbReference>
<dbReference type="InterPro" id="IPR002367">
    <property type="entry name" value="Nociceptin"/>
</dbReference>
<dbReference type="InterPro" id="IPR006024">
    <property type="entry name" value="Opioid_neupept"/>
</dbReference>
<dbReference type="PANTHER" id="PTHR11438:SF2">
    <property type="entry name" value="PREPRONOCICEPTIN"/>
    <property type="match status" value="1"/>
</dbReference>
<dbReference type="PANTHER" id="PTHR11438">
    <property type="entry name" value="PROENKEPHALIN"/>
    <property type="match status" value="1"/>
</dbReference>
<dbReference type="Pfam" id="PF01160">
    <property type="entry name" value="Opiods_neuropep"/>
    <property type="match status" value="1"/>
</dbReference>
<dbReference type="PRINTS" id="PR01028">
    <property type="entry name" value="OPIOIDPRCRSR"/>
</dbReference>
<dbReference type="PRINTS" id="PR01031">
    <property type="entry name" value="ORPHNNPRCRSR"/>
</dbReference>
<dbReference type="PROSITE" id="PS01252">
    <property type="entry name" value="OPIOIDS_PRECURSOR"/>
    <property type="match status" value="1"/>
</dbReference>
<sequence>MKVLLCDLLLLSLFSSVFSSCQRDCLTCQEKLHPALDSFDLEVCILECEEKVFPSPLWTPCTKVMARSSWQLSPAAPEHVAAALYQPRASEMQHLRRMPRVRSLFQEQEEPEPGMEEAGEMEQKQLQKRFGGFTGARKSARKLANQKRFSEFMRQYLVLSMQSSQRRRTLHQNGNV</sequence>
<feature type="signal peptide" evidence="4">
    <location>
        <begin position="1"/>
        <end position="19"/>
    </location>
</feature>
<feature type="propeptide" id="PRO_0000008325">
    <location>
        <begin position="20"/>
        <end position="95"/>
    </location>
</feature>
<feature type="peptide" id="PRO_0000008326" description="Nocistatin" evidence="7">
    <location>
        <begin position="98"/>
        <end position="127"/>
    </location>
</feature>
<feature type="peptide" id="PRO_0000008327" description="Nociceptin" evidence="2">
    <location>
        <begin position="130"/>
        <end position="146"/>
    </location>
</feature>
<feature type="peptide" id="PRO_0000008328" description="Orphanin FQ2" evidence="7">
    <location>
        <begin position="149"/>
        <end position="165"/>
    </location>
</feature>
<feature type="propeptide" id="PRO_0000008329">
    <location>
        <begin position="169"/>
        <end position="176"/>
    </location>
</feature>
<feature type="splice variant" id="VSP_055146" description="In isoform 2." evidence="6">
    <location>
        <begin position="1"/>
        <end position="64"/>
    </location>
</feature>
<feature type="strand" evidence="8">
    <location>
        <begin position="132"/>
        <end position="135"/>
    </location>
</feature>
<feature type="helix" evidence="8">
    <location>
        <begin position="136"/>
        <end position="142"/>
    </location>
</feature>
<evidence type="ECO:0000250" key="1">
    <source>
        <dbReference type="UniProtKB" id="O62647"/>
    </source>
</evidence>
<evidence type="ECO:0000250" key="2">
    <source>
        <dbReference type="UniProtKB" id="P55791"/>
    </source>
</evidence>
<evidence type="ECO:0000250" key="3">
    <source>
        <dbReference type="UniProtKB" id="Q64387"/>
    </source>
</evidence>
<evidence type="ECO:0000255" key="4"/>
<evidence type="ECO:0000269" key="5">
    <source>
    </source>
</evidence>
<evidence type="ECO:0000303" key="6">
    <source>
    </source>
</evidence>
<evidence type="ECO:0000305" key="7"/>
<evidence type="ECO:0007829" key="8">
    <source>
        <dbReference type="PDB" id="8F7X"/>
    </source>
</evidence>
<comment type="function">
    <molecule>Nociceptin</molecule>
    <text evidence="2">Ligand of the opioid receptor-like receptor OPRL1. It may act as a transmitter in the brain by modulating nociceptive and locomotor behavior. May be involved in neuronal differentiation and development.</text>
</comment>
<comment type="function">
    <molecule>Nocistatin</molecule>
    <text evidence="1">Blocks nociceptin action in pain transmission by inhibiting nociceptin-induced hyperalgesia and allodynia.</text>
</comment>
<comment type="function">
    <molecule>Orphanin FQ2</molecule>
    <text evidence="3">Has potent analgesic activity.</text>
</comment>
<comment type="interaction">
    <interactant intactId="EBI-6656256">
        <id>PRO_0000008327</id>
    </interactant>
    <interactant intactId="EBI-2624699">
        <id>P41146</id>
        <label>OPRL1</label>
    </interactant>
    <organismsDiffer>false</organismsDiffer>
    <experiments>2</experiments>
</comment>
<comment type="subcellular location">
    <subcellularLocation>
        <location>Secreted</location>
    </subcellularLocation>
</comment>
<comment type="alternative products">
    <event type="alternative splicing"/>
    <isoform>
        <id>Q13519-1</id>
        <name>1</name>
        <sequence type="displayed"/>
    </isoform>
    <isoform>
        <id>Q13519-2</id>
        <name>2</name>
        <sequence type="described" ref="VSP_055146"/>
    </isoform>
</comment>
<comment type="tissue specificity">
    <text evidence="5">Predominantly expressed in the brain and spinal cord. Also expressed and secreted by peripheral blood neutrophils following degranulation.</text>
</comment>
<comment type="PTM">
    <text>Specific enzymatic cleavages at paired basic residues probably yield other active peptides besides nociceptin.</text>
</comment>
<comment type="PTM">
    <text>The N-terminal domain contains 6 conserved cysteines thought to be involved in disulfide bonding and/or processing.</text>
</comment>
<comment type="similarity">
    <text evidence="7">Belongs to the opioid neuropeptide precursor family.</text>
</comment>
<gene>
    <name type="primary">PNOC</name>
    <name type="synonym">OFQ</name>
</gene>
<protein>
    <recommendedName>
        <fullName>Prepronociceptin</fullName>
    </recommendedName>
    <component>
        <recommendedName>
            <fullName>Nocistatin</fullName>
        </recommendedName>
    </component>
    <component>
        <recommendedName>
            <fullName>Nociceptin</fullName>
        </recommendedName>
        <alternativeName>
            <fullName>Orphanin FQ</fullName>
        </alternativeName>
        <alternativeName>
            <fullName>PPNOC</fullName>
        </alternativeName>
    </component>
    <component>
        <recommendedName>
            <fullName>Orphanin FQ2</fullName>
        </recommendedName>
    </component>
</protein>
<keyword id="KW-0002">3D-structure</keyword>
<keyword id="KW-0025">Alternative splicing</keyword>
<keyword id="KW-0165">Cleavage on pair of basic residues</keyword>
<keyword id="KW-1015">Disulfide bond</keyword>
<keyword id="KW-0527">Neuropeptide</keyword>
<keyword id="KW-0529">Neurotransmitter</keyword>
<keyword id="KW-0555">Opioid peptide</keyword>
<keyword id="KW-1267">Proteomics identification</keyword>
<keyword id="KW-1185">Reference proteome</keyword>
<keyword id="KW-0964">Secreted</keyword>
<keyword id="KW-0732">Signal</keyword>
<name>PNOC_HUMAN</name>
<accession>Q13519</accession>
<accession>B7Z749</accession>
<accession>Q6FH16</accession>